<feature type="chain" id="PRO_0000234964" description="Serine hydroxymethyltransferase">
    <location>
        <begin position="1"/>
        <end position="497"/>
    </location>
</feature>
<feature type="binding site" evidence="1">
    <location>
        <position position="176"/>
    </location>
    <ligand>
        <name>(6S)-5,6,7,8-tetrahydrofolate</name>
        <dbReference type="ChEBI" id="CHEBI:57453"/>
    </ligand>
</feature>
<feature type="binding site" evidence="1">
    <location>
        <begin position="180"/>
        <end position="182"/>
    </location>
    <ligand>
        <name>(6S)-5,6,7,8-tetrahydrofolate</name>
        <dbReference type="ChEBI" id="CHEBI:57453"/>
    </ligand>
</feature>
<feature type="site" description="Plays an important role in substrate specificity" evidence="1">
    <location>
        <position position="288"/>
    </location>
</feature>
<feature type="modified residue" description="N6-(pyridoxal phosphate)lysine" evidence="1">
    <location>
        <position position="289"/>
    </location>
</feature>
<dbReference type="EC" id="2.1.2.1" evidence="1"/>
<dbReference type="EMBL" id="CR848038">
    <property type="protein sequence ID" value="CAH63677.1"/>
    <property type="molecule type" value="Genomic_DNA"/>
</dbReference>
<dbReference type="RefSeq" id="WP_011096910.1">
    <property type="nucleotide sequence ID" value="NC_004552.2"/>
</dbReference>
<dbReference type="SMR" id="Q5L6P4"/>
<dbReference type="KEGG" id="cab:CAB220"/>
<dbReference type="eggNOG" id="COG0112">
    <property type="taxonomic scope" value="Bacteria"/>
</dbReference>
<dbReference type="HOGENOM" id="CLU_022477_2_1_0"/>
<dbReference type="OrthoDB" id="9803846at2"/>
<dbReference type="UniPathway" id="UPA00193"/>
<dbReference type="UniPathway" id="UPA00288">
    <property type="reaction ID" value="UER01023"/>
</dbReference>
<dbReference type="Proteomes" id="UP000001012">
    <property type="component" value="Chromosome"/>
</dbReference>
<dbReference type="GO" id="GO:0005829">
    <property type="term" value="C:cytosol"/>
    <property type="evidence" value="ECO:0007669"/>
    <property type="project" value="TreeGrafter"/>
</dbReference>
<dbReference type="GO" id="GO:0004372">
    <property type="term" value="F:glycine hydroxymethyltransferase activity"/>
    <property type="evidence" value="ECO:0007669"/>
    <property type="project" value="UniProtKB-UniRule"/>
</dbReference>
<dbReference type="GO" id="GO:0030170">
    <property type="term" value="F:pyridoxal phosphate binding"/>
    <property type="evidence" value="ECO:0007669"/>
    <property type="project" value="UniProtKB-UniRule"/>
</dbReference>
<dbReference type="GO" id="GO:0019264">
    <property type="term" value="P:glycine biosynthetic process from serine"/>
    <property type="evidence" value="ECO:0007669"/>
    <property type="project" value="UniProtKB-UniRule"/>
</dbReference>
<dbReference type="GO" id="GO:0035999">
    <property type="term" value="P:tetrahydrofolate interconversion"/>
    <property type="evidence" value="ECO:0007669"/>
    <property type="project" value="UniProtKB-UniRule"/>
</dbReference>
<dbReference type="CDD" id="cd00378">
    <property type="entry name" value="SHMT"/>
    <property type="match status" value="1"/>
</dbReference>
<dbReference type="FunFam" id="3.40.640.10:FF:000060">
    <property type="entry name" value="Serine hydroxymethyltransferase"/>
    <property type="match status" value="1"/>
</dbReference>
<dbReference type="Gene3D" id="3.90.1150.10">
    <property type="entry name" value="Aspartate Aminotransferase, domain 1"/>
    <property type="match status" value="1"/>
</dbReference>
<dbReference type="Gene3D" id="3.40.640.10">
    <property type="entry name" value="Type I PLP-dependent aspartate aminotransferase-like (Major domain)"/>
    <property type="match status" value="1"/>
</dbReference>
<dbReference type="HAMAP" id="MF_00051">
    <property type="entry name" value="SHMT"/>
    <property type="match status" value="1"/>
</dbReference>
<dbReference type="InterPro" id="IPR015424">
    <property type="entry name" value="PyrdxlP-dep_Trfase"/>
</dbReference>
<dbReference type="InterPro" id="IPR015421">
    <property type="entry name" value="PyrdxlP-dep_Trfase_major"/>
</dbReference>
<dbReference type="InterPro" id="IPR015422">
    <property type="entry name" value="PyrdxlP-dep_Trfase_small"/>
</dbReference>
<dbReference type="InterPro" id="IPR001085">
    <property type="entry name" value="Ser_HO-MeTrfase"/>
</dbReference>
<dbReference type="InterPro" id="IPR049943">
    <property type="entry name" value="Ser_HO-MeTrfase-like"/>
</dbReference>
<dbReference type="InterPro" id="IPR019798">
    <property type="entry name" value="Ser_HO-MeTrfase_PLP_BS"/>
</dbReference>
<dbReference type="InterPro" id="IPR039429">
    <property type="entry name" value="SHMT-like_dom"/>
</dbReference>
<dbReference type="NCBIfam" id="NF000586">
    <property type="entry name" value="PRK00011.1"/>
    <property type="match status" value="1"/>
</dbReference>
<dbReference type="NCBIfam" id="NF010094">
    <property type="entry name" value="PRK13580.1"/>
    <property type="match status" value="1"/>
</dbReference>
<dbReference type="PANTHER" id="PTHR11680">
    <property type="entry name" value="SERINE HYDROXYMETHYLTRANSFERASE"/>
    <property type="match status" value="1"/>
</dbReference>
<dbReference type="PANTHER" id="PTHR11680:SF35">
    <property type="entry name" value="SERINE HYDROXYMETHYLTRANSFERASE 1"/>
    <property type="match status" value="1"/>
</dbReference>
<dbReference type="Pfam" id="PF00464">
    <property type="entry name" value="SHMT"/>
    <property type="match status" value="2"/>
</dbReference>
<dbReference type="PIRSF" id="PIRSF000412">
    <property type="entry name" value="SHMT"/>
    <property type="match status" value="1"/>
</dbReference>
<dbReference type="SUPFAM" id="SSF53383">
    <property type="entry name" value="PLP-dependent transferases"/>
    <property type="match status" value="1"/>
</dbReference>
<dbReference type="PROSITE" id="PS00096">
    <property type="entry name" value="SHMT"/>
    <property type="match status" value="1"/>
</dbReference>
<comment type="function">
    <text evidence="1">Catalyzes the reversible interconversion of serine and glycine with tetrahydrofolate (THF) serving as the one-carbon carrier. This reaction serves as the major source of one-carbon groups required for the biosynthesis of purines, thymidylate, methionine, and other important biomolecules. Also exhibits THF-independent aldolase activity toward beta-hydroxyamino acids, producing glycine and aldehydes, via a retro-aldol mechanism.</text>
</comment>
<comment type="catalytic activity">
    <reaction evidence="1">
        <text>(6R)-5,10-methylene-5,6,7,8-tetrahydrofolate + glycine + H2O = (6S)-5,6,7,8-tetrahydrofolate + L-serine</text>
        <dbReference type="Rhea" id="RHEA:15481"/>
        <dbReference type="ChEBI" id="CHEBI:15377"/>
        <dbReference type="ChEBI" id="CHEBI:15636"/>
        <dbReference type="ChEBI" id="CHEBI:33384"/>
        <dbReference type="ChEBI" id="CHEBI:57305"/>
        <dbReference type="ChEBI" id="CHEBI:57453"/>
        <dbReference type="EC" id="2.1.2.1"/>
    </reaction>
</comment>
<comment type="cofactor">
    <cofactor evidence="1">
        <name>pyridoxal 5'-phosphate</name>
        <dbReference type="ChEBI" id="CHEBI:597326"/>
    </cofactor>
</comment>
<comment type="pathway">
    <text evidence="1">One-carbon metabolism; tetrahydrofolate interconversion.</text>
</comment>
<comment type="pathway">
    <text evidence="1">Amino-acid biosynthesis; glycine biosynthesis; glycine from L-serine: step 1/1.</text>
</comment>
<comment type="subunit">
    <text evidence="1">Homodimer.</text>
</comment>
<comment type="subcellular location">
    <subcellularLocation>
        <location evidence="1">Cytoplasm</location>
    </subcellularLocation>
</comment>
<comment type="similarity">
    <text evidence="1">Belongs to the SHMT family.</text>
</comment>
<name>GLYA_CHLAB</name>
<sequence length="497" mass="54259">MVSLLHKFLENASGKKGQDLASTAYLAALDHLLHSFPSIGKSIIDELKSQRSRLKMIASENYASISVQLAMGNLLTDKYCEGSPFKRFYSCCENVDAIEWECVETAKELFGAESAFVQPHSGADANLLAIMAIITQKIQGPAVKRLGYKTINDLTDKEYTELKAEIGSHVCLGPSLNSGGHLTHGTVRLNIMSKLMRCVPYEVNKKTECFDYSEIARLVRTYKPTVLIAGYSSYSRRLNFSTLKQIADDCGAVLWVDMAHFAGLVAGGVFIEEENPIPFADIITTTTHKTLRGPRGGLVLASKEYDAVINRACPLMMGGPLPHVIAAKAVALKEALTVDFKKYAHQVVDNARTLAEHFQKQGLRLLTGGTDNHMLIIDLTSLGISGRIAEDILSSVGIAVNRNTIPSDAVGKWDTSGIRLGTPALTTLGMGSDEMEEVANIIVKVLRNITLRRNADDSFSKSEGELPENIAEEARARVAGLLSRFPLYPEIDLETLV</sequence>
<reference key="1">
    <citation type="journal article" date="2005" name="Genome Res.">
        <title>The Chlamydophila abortus genome sequence reveals an array of variable proteins that contribute to interspecies variation.</title>
        <authorList>
            <person name="Thomson N.R."/>
            <person name="Yeats C."/>
            <person name="Bell K."/>
            <person name="Holden M.T.G."/>
            <person name="Bentley S.D."/>
            <person name="Livingstone M."/>
            <person name="Cerdeno-Tarraga A.-M."/>
            <person name="Harris B."/>
            <person name="Doggett J."/>
            <person name="Ormond D."/>
            <person name="Mungall K."/>
            <person name="Clarke K."/>
            <person name="Feltwell T."/>
            <person name="Hance Z."/>
            <person name="Sanders M."/>
            <person name="Quail M.A."/>
            <person name="Price C."/>
            <person name="Barrell B.G."/>
            <person name="Parkhill J."/>
            <person name="Longbottom D."/>
        </authorList>
    </citation>
    <scope>NUCLEOTIDE SEQUENCE [LARGE SCALE GENOMIC DNA]</scope>
    <source>
        <strain>DSM 27085 / S26/3</strain>
    </source>
</reference>
<protein>
    <recommendedName>
        <fullName evidence="1">Serine hydroxymethyltransferase</fullName>
        <shortName evidence="1">SHMT</shortName>
        <shortName evidence="1">Serine methylase</shortName>
        <ecNumber evidence="1">2.1.2.1</ecNumber>
    </recommendedName>
</protein>
<organism>
    <name type="scientific">Chlamydia abortus (strain DSM 27085 / S26/3)</name>
    <name type="common">Chlamydophila abortus</name>
    <dbReference type="NCBI Taxonomy" id="218497"/>
    <lineage>
        <taxon>Bacteria</taxon>
        <taxon>Pseudomonadati</taxon>
        <taxon>Chlamydiota</taxon>
        <taxon>Chlamydiia</taxon>
        <taxon>Chlamydiales</taxon>
        <taxon>Chlamydiaceae</taxon>
        <taxon>Chlamydia/Chlamydophila group</taxon>
        <taxon>Chlamydia</taxon>
    </lineage>
</organism>
<accession>Q5L6P4</accession>
<gene>
    <name evidence="1" type="primary">glyA</name>
    <name type="ordered locus">CAB220</name>
</gene>
<keyword id="KW-0028">Amino-acid biosynthesis</keyword>
<keyword id="KW-0963">Cytoplasm</keyword>
<keyword id="KW-0554">One-carbon metabolism</keyword>
<keyword id="KW-0663">Pyridoxal phosphate</keyword>
<keyword id="KW-0808">Transferase</keyword>
<proteinExistence type="inferred from homology"/>
<evidence type="ECO:0000255" key="1">
    <source>
        <dbReference type="HAMAP-Rule" id="MF_00051"/>
    </source>
</evidence>